<organism>
    <name type="scientific">Mycobacteroides abscessus (strain ATCC 19977 / DSM 44196 / CCUG 20993 / CIP 104536 / JCM 13569 / NCTC 13031 / TMC 1543 / L948)</name>
    <name type="common">Mycobacterium abscessus</name>
    <dbReference type="NCBI Taxonomy" id="561007"/>
    <lineage>
        <taxon>Bacteria</taxon>
        <taxon>Bacillati</taxon>
        <taxon>Actinomycetota</taxon>
        <taxon>Actinomycetes</taxon>
        <taxon>Mycobacteriales</taxon>
        <taxon>Mycobacteriaceae</taxon>
        <taxon>Mycobacteroides</taxon>
        <taxon>Mycobacteroides abscessus</taxon>
    </lineage>
</organism>
<gene>
    <name evidence="1" type="primary">miaB</name>
    <name type="ordered locus">MAB_3048c</name>
</gene>
<feature type="chain" id="PRO_0000374384" description="tRNA-2-methylthio-N(6)-dimethylallyladenosine synthase">
    <location>
        <begin position="1"/>
        <end position="507"/>
    </location>
</feature>
<feature type="domain" description="MTTase N-terminal" evidence="1">
    <location>
        <begin position="13"/>
        <end position="129"/>
    </location>
</feature>
<feature type="domain" description="Radical SAM core" evidence="2">
    <location>
        <begin position="152"/>
        <end position="388"/>
    </location>
</feature>
<feature type="domain" description="TRAM" evidence="1">
    <location>
        <begin position="391"/>
        <end position="462"/>
    </location>
</feature>
<feature type="region of interest" description="Disordered" evidence="3">
    <location>
        <begin position="459"/>
        <end position="492"/>
    </location>
</feature>
<feature type="compositionally biased region" description="Basic and acidic residues" evidence="3">
    <location>
        <begin position="459"/>
        <end position="478"/>
    </location>
</feature>
<feature type="binding site" evidence="1">
    <location>
        <position position="22"/>
    </location>
    <ligand>
        <name>[4Fe-4S] cluster</name>
        <dbReference type="ChEBI" id="CHEBI:49883"/>
        <label>1</label>
    </ligand>
</feature>
<feature type="binding site" evidence="1">
    <location>
        <position position="58"/>
    </location>
    <ligand>
        <name>[4Fe-4S] cluster</name>
        <dbReference type="ChEBI" id="CHEBI:49883"/>
        <label>1</label>
    </ligand>
</feature>
<feature type="binding site" evidence="1">
    <location>
        <position position="92"/>
    </location>
    <ligand>
        <name>[4Fe-4S] cluster</name>
        <dbReference type="ChEBI" id="CHEBI:49883"/>
        <label>1</label>
    </ligand>
</feature>
<feature type="binding site" evidence="1">
    <location>
        <position position="166"/>
    </location>
    <ligand>
        <name>[4Fe-4S] cluster</name>
        <dbReference type="ChEBI" id="CHEBI:49883"/>
        <label>2</label>
        <note>4Fe-4S-S-AdoMet</note>
    </ligand>
</feature>
<feature type="binding site" evidence="1">
    <location>
        <position position="170"/>
    </location>
    <ligand>
        <name>[4Fe-4S] cluster</name>
        <dbReference type="ChEBI" id="CHEBI:49883"/>
        <label>2</label>
        <note>4Fe-4S-S-AdoMet</note>
    </ligand>
</feature>
<feature type="binding site" evidence="1">
    <location>
        <position position="173"/>
    </location>
    <ligand>
        <name>[4Fe-4S] cluster</name>
        <dbReference type="ChEBI" id="CHEBI:49883"/>
        <label>2</label>
        <note>4Fe-4S-S-AdoMet</note>
    </ligand>
</feature>
<keyword id="KW-0004">4Fe-4S</keyword>
<keyword id="KW-0963">Cytoplasm</keyword>
<keyword id="KW-0408">Iron</keyword>
<keyword id="KW-0411">Iron-sulfur</keyword>
<keyword id="KW-0479">Metal-binding</keyword>
<keyword id="KW-1185">Reference proteome</keyword>
<keyword id="KW-0949">S-adenosyl-L-methionine</keyword>
<keyword id="KW-0808">Transferase</keyword>
<keyword id="KW-0819">tRNA processing</keyword>
<comment type="function">
    <text evidence="1">Catalyzes the methylthiolation of N6-(dimethylallyl)adenosine (i(6)A), leading to the formation of 2-methylthio-N6-(dimethylallyl)adenosine (ms(2)i(6)A) at position 37 in tRNAs that read codons beginning with uridine.</text>
</comment>
<comment type="catalytic activity">
    <reaction evidence="1">
        <text>N(6)-dimethylallyladenosine(37) in tRNA + (sulfur carrier)-SH + AH2 + 2 S-adenosyl-L-methionine = 2-methylsulfanyl-N(6)-dimethylallyladenosine(37) in tRNA + (sulfur carrier)-H + 5'-deoxyadenosine + L-methionine + A + S-adenosyl-L-homocysteine + 2 H(+)</text>
        <dbReference type="Rhea" id="RHEA:37067"/>
        <dbReference type="Rhea" id="RHEA-COMP:10375"/>
        <dbReference type="Rhea" id="RHEA-COMP:10376"/>
        <dbReference type="Rhea" id="RHEA-COMP:14737"/>
        <dbReference type="Rhea" id="RHEA-COMP:14739"/>
        <dbReference type="ChEBI" id="CHEBI:13193"/>
        <dbReference type="ChEBI" id="CHEBI:15378"/>
        <dbReference type="ChEBI" id="CHEBI:17319"/>
        <dbReference type="ChEBI" id="CHEBI:17499"/>
        <dbReference type="ChEBI" id="CHEBI:29917"/>
        <dbReference type="ChEBI" id="CHEBI:57844"/>
        <dbReference type="ChEBI" id="CHEBI:57856"/>
        <dbReference type="ChEBI" id="CHEBI:59789"/>
        <dbReference type="ChEBI" id="CHEBI:64428"/>
        <dbReference type="ChEBI" id="CHEBI:74415"/>
        <dbReference type="ChEBI" id="CHEBI:74417"/>
        <dbReference type="EC" id="2.8.4.3"/>
    </reaction>
</comment>
<comment type="cofactor">
    <cofactor evidence="1">
        <name>[4Fe-4S] cluster</name>
        <dbReference type="ChEBI" id="CHEBI:49883"/>
    </cofactor>
    <text evidence="1">Binds 2 [4Fe-4S] clusters. One cluster is coordinated with 3 cysteines and an exchangeable S-adenosyl-L-methionine.</text>
</comment>
<comment type="subunit">
    <text evidence="1">Monomer.</text>
</comment>
<comment type="subcellular location">
    <subcellularLocation>
        <location evidence="1">Cytoplasm</location>
    </subcellularLocation>
</comment>
<comment type="similarity">
    <text evidence="1">Belongs to the methylthiotransferase family. MiaB subfamily.</text>
</comment>
<accession>B1MD05</accession>
<evidence type="ECO:0000255" key="1">
    <source>
        <dbReference type="HAMAP-Rule" id="MF_01864"/>
    </source>
</evidence>
<evidence type="ECO:0000255" key="2">
    <source>
        <dbReference type="PROSITE-ProRule" id="PRU01266"/>
    </source>
</evidence>
<evidence type="ECO:0000256" key="3">
    <source>
        <dbReference type="SAM" id="MobiDB-lite"/>
    </source>
</evidence>
<protein>
    <recommendedName>
        <fullName evidence="1">tRNA-2-methylthio-N(6)-dimethylallyladenosine synthase</fullName>
        <ecNumber evidence="1">2.8.4.3</ecNumber>
    </recommendedName>
    <alternativeName>
        <fullName evidence="1">(Dimethylallyl)adenosine tRNA methylthiotransferase MiaB</fullName>
    </alternativeName>
    <alternativeName>
        <fullName evidence="1">tRNA-i(6)A37 methylthiotransferase</fullName>
    </alternativeName>
</protein>
<proteinExistence type="inferred from homology"/>
<reference key="1">
    <citation type="journal article" date="2009" name="PLoS ONE">
        <title>Non mycobacterial virulence genes in the genome of the emerging pathogen Mycobacterium abscessus.</title>
        <authorList>
            <person name="Ripoll F."/>
            <person name="Pasek S."/>
            <person name="Schenowitz C."/>
            <person name="Dossat C."/>
            <person name="Barbe V."/>
            <person name="Rottman M."/>
            <person name="Macheras E."/>
            <person name="Heym B."/>
            <person name="Herrmann J.L."/>
            <person name="Daffe M."/>
            <person name="Brosch R."/>
            <person name="Risler J.L."/>
            <person name="Gaillard J.L."/>
        </authorList>
    </citation>
    <scope>NUCLEOTIDE SEQUENCE [LARGE SCALE GENOMIC DNA]</scope>
    <source>
        <strain>ATCC 19977 / DSM 44196 / CCUG 20993 / CIP 104536 / JCM 13569 / NCTC 13031 / TMC 1543 / L948</strain>
    </source>
</reference>
<name>MIAB_MYCA9</name>
<dbReference type="EC" id="2.8.4.3" evidence="1"/>
<dbReference type="EMBL" id="CU458896">
    <property type="protein sequence ID" value="CAM63126.1"/>
    <property type="molecule type" value="Genomic_DNA"/>
</dbReference>
<dbReference type="RefSeq" id="WP_012296630.1">
    <property type="nucleotide sequence ID" value="NZ_MLCG01000003.1"/>
</dbReference>
<dbReference type="SMR" id="B1MD05"/>
<dbReference type="GeneID" id="93379981"/>
<dbReference type="KEGG" id="mab:MAB_3048c"/>
<dbReference type="Proteomes" id="UP000007137">
    <property type="component" value="Chromosome"/>
</dbReference>
<dbReference type="GO" id="GO:0005829">
    <property type="term" value="C:cytosol"/>
    <property type="evidence" value="ECO:0007669"/>
    <property type="project" value="TreeGrafter"/>
</dbReference>
<dbReference type="GO" id="GO:0051539">
    <property type="term" value="F:4 iron, 4 sulfur cluster binding"/>
    <property type="evidence" value="ECO:0007669"/>
    <property type="project" value="UniProtKB-UniRule"/>
</dbReference>
<dbReference type="GO" id="GO:0046872">
    <property type="term" value="F:metal ion binding"/>
    <property type="evidence" value="ECO:0007669"/>
    <property type="project" value="UniProtKB-KW"/>
</dbReference>
<dbReference type="GO" id="GO:0035597">
    <property type="term" value="F:N6-isopentenyladenosine methylthiotransferase activity"/>
    <property type="evidence" value="ECO:0007669"/>
    <property type="project" value="TreeGrafter"/>
</dbReference>
<dbReference type="CDD" id="cd01335">
    <property type="entry name" value="Radical_SAM"/>
    <property type="match status" value="1"/>
</dbReference>
<dbReference type="FunFam" id="3.40.50.12160:FF:000003">
    <property type="entry name" value="CDK5 regulatory subunit-associated protein 1"/>
    <property type="match status" value="1"/>
</dbReference>
<dbReference type="FunFam" id="3.80.30.20:FF:000001">
    <property type="entry name" value="tRNA-2-methylthio-N(6)-dimethylallyladenosine synthase 2"/>
    <property type="match status" value="1"/>
</dbReference>
<dbReference type="Gene3D" id="3.40.50.12160">
    <property type="entry name" value="Methylthiotransferase, N-terminal domain"/>
    <property type="match status" value="1"/>
</dbReference>
<dbReference type="Gene3D" id="3.80.30.20">
    <property type="entry name" value="tm_1862 like domain"/>
    <property type="match status" value="1"/>
</dbReference>
<dbReference type="HAMAP" id="MF_01864">
    <property type="entry name" value="tRNA_metthiotr_MiaB"/>
    <property type="match status" value="1"/>
</dbReference>
<dbReference type="InterPro" id="IPR006638">
    <property type="entry name" value="Elp3/MiaA/NifB-like_rSAM"/>
</dbReference>
<dbReference type="InterPro" id="IPR005839">
    <property type="entry name" value="Methylthiotransferase"/>
</dbReference>
<dbReference type="InterPro" id="IPR020612">
    <property type="entry name" value="Methylthiotransferase_CS"/>
</dbReference>
<dbReference type="InterPro" id="IPR013848">
    <property type="entry name" value="Methylthiotransferase_N"/>
</dbReference>
<dbReference type="InterPro" id="IPR038135">
    <property type="entry name" value="Methylthiotransferase_N_sf"/>
</dbReference>
<dbReference type="InterPro" id="IPR006463">
    <property type="entry name" value="MiaB_methiolase"/>
</dbReference>
<dbReference type="InterPro" id="IPR007197">
    <property type="entry name" value="rSAM"/>
</dbReference>
<dbReference type="InterPro" id="IPR023404">
    <property type="entry name" value="rSAM_horseshoe"/>
</dbReference>
<dbReference type="InterPro" id="IPR002792">
    <property type="entry name" value="TRAM_dom"/>
</dbReference>
<dbReference type="NCBIfam" id="TIGR01574">
    <property type="entry name" value="miaB-methiolase"/>
    <property type="match status" value="1"/>
</dbReference>
<dbReference type="NCBIfam" id="TIGR00089">
    <property type="entry name" value="MiaB/RimO family radical SAM methylthiotransferase"/>
    <property type="match status" value="1"/>
</dbReference>
<dbReference type="PANTHER" id="PTHR43020">
    <property type="entry name" value="CDK5 REGULATORY SUBUNIT-ASSOCIATED PROTEIN 1"/>
    <property type="match status" value="1"/>
</dbReference>
<dbReference type="PANTHER" id="PTHR43020:SF2">
    <property type="entry name" value="MITOCHONDRIAL TRNA METHYLTHIOTRANSFERASE CDK5RAP1"/>
    <property type="match status" value="1"/>
</dbReference>
<dbReference type="Pfam" id="PF04055">
    <property type="entry name" value="Radical_SAM"/>
    <property type="match status" value="1"/>
</dbReference>
<dbReference type="Pfam" id="PF00919">
    <property type="entry name" value="UPF0004"/>
    <property type="match status" value="1"/>
</dbReference>
<dbReference type="SFLD" id="SFLDF00273">
    <property type="entry name" value="(dimethylallyl)adenosine_tRNA"/>
    <property type="match status" value="1"/>
</dbReference>
<dbReference type="SFLD" id="SFLDG01082">
    <property type="entry name" value="B12-binding_domain_containing"/>
    <property type="match status" value="1"/>
</dbReference>
<dbReference type="SFLD" id="SFLDS00029">
    <property type="entry name" value="Radical_SAM"/>
    <property type="match status" value="1"/>
</dbReference>
<dbReference type="SMART" id="SM00729">
    <property type="entry name" value="Elp3"/>
    <property type="match status" value="1"/>
</dbReference>
<dbReference type="SUPFAM" id="SSF102114">
    <property type="entry name" value="Radical SAM enzymes"/>
    <property type="match status" value="1"/>
</dbReference>
<dbReference type="PROSITE" id="PS51449">
    <property type="entry name" value="MTTASE_N"/>
    <property type="match status" value="1"/>
</dbReference>
<dbReference type="PROSITE" id="PS01278">
    <property type="entry name" value="MTTASE_RADICAL"/>
    <property type="match status" value="1"/>
</dbReference>
<dbReference type="PROSITE" id="PS51918">
    <property type="entry name" value="RADICAL_SAM"/>
    <property type="match status" value="1"/>
</dbReference>
<dbReference type="PROSITE" id="PS50926">
    <property type="entry name" value="TRAM"/>
    <property type="match status" value="1"/>
</dbReference>
<sequence>MTSTATSGESAVRTYQVRTYGCQMNVHDSERVSGLLDAAGYVKAPEGTDADIVIFNTCAVRENADNKLYGNISHLAPRKAANPNMQIAVGGCLAQKDREGMLAKAPWVDVVFGTHNIGSLPALLERARHNNEAQVEIVEALEHFPSALPATRESAYAAWVSISVGCNNTCTFCIVPSLRGKEIDRRPGDILGEVQALVDQGVLEVTLLGQNVNAYGVNFADPEIPRDRGAFAELLRACGRIDGLERVRFTSPHPAEFTDDVIEAMAQTPNVCPQLHMPLQSGSDRILKAMRRSYRSERFLSIIDKVRSAMPDAAITTDIIVGFPGETEEDFQQTLEVVRRARFSSAFTFQYSIRPGTPAAKLPDQLPKAVVQERYDRLIALQESVTLEENQKQIGRMIEVLIATGEGRKDGETARMSGRARDGRLVHFRPQGHVDGALRPGDIITVDVTGAAPHHLIADDGVRSHRRTRAGDAHEAGKKPSTPGIGLGMPAIGAPKTERIEVAGCGL</sequence>